<accession>Q6S6T4</accession>
<dbReference type="EMBL" id="AY464052">
    <property type="protein sequence ID" value="AAS45922.1"/>
    <property type="molecule type" value="Genomic_DNA"/>
</dbReference>
<dbReference type="Proteomes" id="UP000008296">
    <property type="component" value="Segment"/>
</dbReference>
<dbReference type="GO" id="GO:0044177">
    <property type="term" value="C:host cell Golgi apparatus"/>
    <property type="evidence" value="ECO:0007669"/>
    <property type="project" value="UniProtKB-SubCell"/>
</dbReference>
<dbReference type="GO" id="GO:0044196">
    <property type="term" value="C:host cell nucleolus"/>
    <property type="evidence" value="ECO:0007669"/>
    <property type="project" value="UniProtKB-SubCell"/>
</dbReference>
<dbReference type="GO" id="GO:0044423">
    <property type="term" value="C:virion component"/>
    <property type="evidence" value="ECO:0007669"/>
    <property type="project" value="UniProtKB-KW"/>
</dbReference>
<dbReference type="InterPro" id="IPR002580">
    <property type="entry name" value="Herpes_UL24"/>
</dbReference>
<dbReference type="Pfam" id="PF01646">
    <property type="entry name" value="Herpes_UL24"/>
    <property type="match status" value="1"/>
</dbReference>
<comment type="function">
    <text evidence="1">May participate in nuclear egress of viral particles. Plays a role in the dispersal of several host nucleolar proteins including NCL/nucleolin and NPM1. Since deletion of host NCL/nucleolin negatively impact on nuclear egress, UL24 supposedly acts on this process through its effect on host nucleoli (By similarity).</text>
</comment>
<comment type="subcellular location">
    <subcellularLocation>
        <location evidence="1">Virion</location>
    </subcellularLocation>
    <subcellularLocation>
        <location evidence="1">Host cytoplasm</location>
    </subcellularLocation>
    <subcellularLocation>
        <location evidence="1">Host nucleus</location>
        <location evidence="1">Host nucleolus</location>
    </subcellularLocation>
    <subcellularLocation>
        <location evidence="1">Host Golgi apparatus</location>
    </subcellularLocation>
</comment>
<comment type="induction">
    <text>Expressed late in the infection cycle.</text>
</comment>
<comment type="similarity">
    <text evidence="2">Belongs to the herpesviridae UL24 family.</text>
</comment>
<proteinExistence type="evidence at transcript level"/>
<reference evidence="2 3" key="1">
    <citation type="submission" date="2003-11" db="EMBL/GenBank/DDBJ databases">
        <authorList>
            <person name="Davis-Poynter N."/>
            <person name="Nugent J."/>
            <person name="Birch-Machin I."/>
            <person name="Allen G.P."/>
        </authorList>
    </citation>
    <scope>NUCLEOTIDE SEQUENCE [LARGE SCALE GENOMIC DNA]</scope>
</reference>
<name>UL24_EHV1V</name>
<organism>
    <name type="scientific">Equine herpesvirus 1 (strain V592)</name>
    <name type="common">EHV-1</name>
    <name type="synonym">Equine abortion virus</name>
    <dbReference type="NCBI Taxonomy" id="310273"/>
    <lineage>
        <taxon>Viruses</taxon>
        <taxon>Duplodnaviria</taxon>
        <taxon>Heunggongvirae</taxon>
        <taxon>Peploviricota</taxon>
        <taxon>Herviviricetes</taxon>
        <taxon>Herpesvirales</taxon>
        <taxon>Orthoherpesviridae</taxon>
        <taxon>Alphaherpesvirinae</taxon>
        <taxon>Varicellovirus</taxon>
        <taxon>Varicellovirus equidalpha1</taxon>
        <taxon>Equid alphaherpesvirus 1</taxon>
    </lineage>
</organism>
<feature type="chain" id="PRO_0000115981" description="Protein UL24 homolog">
    <location>
        <begin position="1"/>
        <end position="272"/>
    </location>
</feature>
<sequence length="272" mass="29216">MKRRQRLTARSRLRAGIRCHNRFYNAMVQDLASAKRNGVYGERLAPLFSELVPAETLKTALGVSLAFEVNLGQRRPDCVCTVQFGKGSDAKGVCILIELKTCRFSKNMNTASKNLQRKGGMRQLHDSCRLLARTLPPGSGEIVLAPVLVFVAQRGMRVLRVTRLSPQVVYSNAAVLSCTISRLAEYAPPVSAKSTRRRCVAKGTKAKAFSTKAAAEPVPSITPAQPSAAAAVVSLFPAAVPANTTNAAAVHQPVAVSHVNPLAWVASLFSPK</sequence>
<organismHost>
    <name type="scientific">Equus caballus</name>
    <name type="common">Horse</name>
    <dbReference type="NCBI Taxonomy" id="9796"/>
</organismHost>
<gene>
    <name type="ordered locus">37</name>
</gene>
<keyword id="KW-1035">Host cytoplasm</keyword>
<keyword id="KW-1040">Host Golgi apparatus</keyword>
<keyword id="KW-1048">Host nucleus</keyword>
<keyword id="KW-0426">Late protein</keyword>
<keyword id="KW-0946">Virion</keyword>
<protein>
    <recommendedName>
        <fullName>Protein UL24 homolog</fullName>
    </recommendedName>
</protein>
<evidence type="ECO:0000250" key="1"/>
<evidence type="ECO:0000305" key="2"/>
<evidence type="ECO:0000312" key="3">
    <source>
        <dbReference type="EMBL" id="AAS45922.1"/>
    </source>
</evidence>